<name>HYUC_PSESN</name>
<evidence type="ECO:0000250" key="1">
    <source>
        <dbReference type="UniProtKB" id="Q53389"/>
    </source>
</evidence>
<evidence type="ECO:0000250" key="2">
    <source>
        <dbReference type="UniProtKB" id="Q6DTN4"/>
    </source>
</evidence>
<evidence type="ECO:0000269" key="3">
    <source>
    </source>
</evidence>
<evidence type="ECO:0000303" key="4">
    <source>
    </source>
</evidence>
<evidence type="ECO:0000305" key="5"/>
<evidence type="ECO:0000305" key="6">
    <source>
    </source>
</evidence>
<feature type="chain" id="PRO_0000061955" description="N-carbamoyl-L-amino-acid amidohydrolase">
    <location>
        <begin position="1"/>
        <end position="414"/>
    </location>
</feature>
<feature type="region of interest" description="Involved in dimerization" evidence="1">
    <location>
        <begin position="214"/>
        <end position="333"/>
    </location>
</feature>
<feature type="binding site" evidence="2">
    <location>
        <position position="83"/>
    </location>
    <ligand>
        <name>a divalent metal cation</name>
        <dbReference type="ChEBI" id="CHEBI:60240"/>
        <label>1</label>
    </ligand>
</feature>
<feature type="binding site" evidence="2">
    <location>
        <position position="94"/>
    </location>
    <ligand>
        <name>a divalent metal cation</name>
        <dbReference type="ChEBI" id="CHEBI:60240"/>
        <label>1</label>
    </ligand>
</feature>
<feature type="binding site" evidence="2">
    <location>
        <position position="94"/>
    </location>
    <ligand>
        <name>a divalent metal cation</name>
        <dbReference type="ChEBI" id="CHEBI:60240"/>
        <label>2</label>
    </ligand>
</feature>
<feature type="binding site" evidence="2">
    <location>
        <position position="129"/>
    </location>
    <ligand>
        <name>a divalent metal cation</name>
        <dbReference type="ChEBI" id="CHEBI:60240"/>
        <label>2</label>
    </ligand>
</feature>
<feature type="binding site" evidence="2">
    <location>
        <position position="195"/>
    </location>
    <ligand>
        <name>a divalent metal cation</name>
        <dbReference type="ChEBI" id="CHEBI:60240"/>
        <label>1</label>
    </ligand>
</feature>
<feature type="binding site" evidence="2">
    <location>
        <position position="198"/>
    </location>
    <ligand>
        <name>an N-carbamoyl-L-alpha-amino acid</name>
        <dbReference type="ChEBI" id="CHEBI:58865"/>
    </ligand>
</feature>
<feature type="binding site" evidence="2">
    <location>
        <position position="231"/>
    </location>
    <ligand>
        <name>an N-carbamoyl-L-alpha-amino acid</name>
        <dbReference type="ChEBI" id="CHEBI:58865"/>
    </ligand>
</feature>
<feature type="binding site" evidence="2">
    <location>
        <position position="281"/>
    </location>
    <ligand>
        <name>an N-carbamoyl-L-alpha-amino acid</name>
        <dbReference type="ChEBI" id="CHEBI:58865"/>
    </ligand>
</feature>
<feature type="binding site" evidence="2">
    <location>
        <position position="294"/>
    </location>
    <ligand>
        <name>an N-carbamoyl-L-alpha-amino acid</name>
        <dbReference type="ChEBI" id="CHEBI:58865"/>
    </ligand>
</feature>
<feature type="binding site" evidence="2">
    <location>
        <position position="363"/>
    </location>
    <ligand>
        <name>an N-carbamoyl-L-alpha-amino acid</name>
        <dbReference type="ChEBI" id="CHEBI:58865"/>
    </ligand>
</feature>
<feature type="binding site" evidence="2">
    <location>
        <position position="388"/>
    </location>
    <ligand>
        <name>a divalent metal cation</name>
        <dbReference type="ChEBI" id="CHEBI:60240"/>
        <label>2</label>
    </ligand>
</feature>
<feature type="site" description="Necessary for dimerization" evidence="1">
    <location>
        <position position="240"/>
    </location>
</feature>
<dbReference type="EC" id="3.5.1.87" evidence="3"/>
<dbReference type="EMBL" id="D10494">
    <property type="protein sequence ID" value="BAA01379.1"/>
    <property type="molecule type" value="Genomic_DNA"/>
</dbReference>
<dbReference type="EMBL" id="M72717">
    <property type="protein sequence ID" value="AAA25847.1"/>
    <property type="molecule type" value="Genomic_DNA"/>
</dbReference>
<dbReference type="SMR" id="Q01264"/>
<dbReference type="MEROPS" id="M20.A07"/>
<dbReference type="KEGG" id="ag:BAA01379"/>
<dbReference type="GO" id="GO:0016813">
    <property type="term" value="F:hydrolase activity, acting on carbon-nitrogen (but not peptide) bonds, in linear amidines"/>
    <property type="evidence" value="ECO:0007669"/>
    <property type="project" value="InterPro"/>
</dbReference>
<dbReference type="GO" id="GO:0046872">
    <property type="term" value="F:metal ion binding"/>
    <property type="evidence" value="ECO:0007669"/>
    <property type="project" value="UniProtKB-KW"/>
</dbReference>
<dbReference type="GO" id="GO:0050538">
    <property type="term" value="F:N-carbamoyl-L-amino-acid hydrolase activity"/>
    <property type="evidence" value="ECO:0000314"/>
    <property type="project" value="UniProtKB"/>
</dbReference>
<dbReference type="GO" id="GO:0008652">
    <property type="term" value="P:amino acid biosynthetic process"/>
    <property type="evidence" value="ECO:0007669"/>
    <property type="project" value="UniProtKB-KW"/>
</dbReference>
<dbReference type="CDD" id="cd03884">
    <property type="entry name" value="M20_bAS"/>
    <property type="match status" value="1"/>
</dbReference>
<dbReference type="Gene3D" id="3.30.70.360">
    <property type="match status" value="1"/>
</dbReference>
<dbReference type="Gene3D" id="3.40.630.10">
    <property type="entry name" value="Zn peptidases"/>
    <property type="match status" value="1"/>
</dbReference>
<dbReference type="InterPro" id="IPR010158">
    <property type="entry name" value="Amidase_Cbmase"/>
</dbReference>
<dbReference type="InterPro" id="IPR036264">
    <property type="entry name" value="Bact_exopeptidase_dim_dom"/>
</dbReference>
<dbReference type="InterPro" id="IPR002933">
    <property type="entry name" value="Peptidase_M20"/>
</dbReference>
<dbReference type="InterPro" id="IPR011650">
    <property type="entry name" value="Peptidase_M20_dimer"/>
</dbReference>
<dbReference type="NCBIfam" id="TIGR01879">
    <property type="entry name" value="hydantase"/>
    <property type="match status" value="1"/>
</dbReference>
<dbReference type="NCBIfam" id="NF006771">
    <property type="entry name" value="PRK09290.1-5"/>
    <property type="match status" value="1"/>
</dbReference>
<dbReference type="PANTHER" id="PTHR32494">
    <property type="entry name" value="ALLANTOATE DEIMINASE-RELATED"/>
    <property type="match status" value="1"/>
</dbReference>
<dbReference type="PANTHER" id="PTHR32494:SF19">
    <property type="entry name" value="ALLANTOATE DEIMINASE-RELATED"/>
    <property type="match status" value="1"/>
</dbReference>
<dbReference type="Pfam" id="PF07687">
    <property type="entry name" value="M20_dimer"/>
    <property type="match status" value="1"/>
</dbReference>
<dbReference type="Pfam" id="PF01546">
    <property type="entry name" value="Peptidase_M20"/>
    <property type="match status" value="1"/>
</dbReference>
<dbReference type="PIRSF" id="PIRSF001235">
    <property type="entry name" value="Amidase_carbamoylase"/>
    <property type="match status" value="1"/>
</dbReference>
<dbReference type="SUPFAM" id="SSF55031">
    <property type="entry name" value="Bacterial exopeptidase dimerisation domain"/>
    <property type="match status" value="1"/>
</dbReference>
<dbReference type="SUPFAM" id="SSF53187">
    <property type="entry name" value="Zn-dependent exopeptidases"/>
    <property type="match status" value="1"/>
</dbReference>
<protein>
    <recommendedName>
        <fullName evidence="6">N-carbamoyl-L-amino-acid amidohydrolase</fullName>
        <ecNumber evidence="3">3.5.1.87</ecNumber>
    </recommendedName>
    <alternativeName>
        <fullName evidence="4">Hydantoin utilization protein C</fullName>
    </alternativeName>
    <alternativeName>
        <fullName evidence="6">L-N-carbamoylase</fullName>
    </alternativeName>
</protein>
<geneLocation type="plasmid">
    <name>pHN671</name>
</geneLocation>
<accession>Q01264</accession>
<comment type="function">
    <text evidence="3">Catalyzes the hydrolysis of N-carbamoyl-L-alpha-amino acids to free L-alpha-amino acids. Is strictly L-specific since it is inactive toward N-carbamoyl-D-alpha-amino acids.</text>
</comment>
<comment type="catalytic activity">
    <reaction evidence="3">
        <text>an N-carbamoyl-L-alpha-amino acid + H2O + 2 H(+) = an L-alpha-amino acid + NH4(+) + CO2</text>
        <dbReference type="Rhea" id="RHEA:17581"/>
        <dbReference type="ChEBI" id="CHEBI:15377"/>
        <dbReference type="ChEBI" id="CHEBI:15378"/>
        <dbReference type="ChEBI" id="CHEBI:16526"/>
        <dbReference type="ChEBI" id="CHEBI:28938"/>
        <dbReference type="ChEBI" id="CHEBI:58865"/>
        <dbReference type="ChEBI" id="CHEBI:59869"/>
        <dbReference type="EC" id="3.5.1.87"/>
    </reaction>
    <physiologicalReaction direction="left-to-right" evidence="6">
        <dbReference type="Rhea" id="RHEA:17582"/>
    </physiologicalReaction>
</comment>
<comment type="catalytic activity">
    <reaction evidence="3">
        <text>N-carbamoyl-L-methionine + H2O + 2 H(+) = L-methionine + NH4(+) + CO2</text>
        <dbReference type="Rhea" id="RHEA:72783"/>
        <dbReference type="ChEBI" id="CHEBI:15377"/>
        <dbReference type="ChEBI" id="CHEBI:15378"/>
        <dbReference type="ChEBI" id="CHEBI:16526"/>
        <dbReference type="ChEBI" id="CHEBI:28938"/>
        <dbReference type="ChEBI" id="CHEBI:57844"/>
        <dbReference type="ChEBI" id="CHEBI:137116"/>
    </reaction>
    <physiologicalReaction direction="left-to-right" evidence="6">
        <dbReference type="Rhea" id="RHEA:72784"/>
    </physiologicalReaction>
</comment>
<comment type="cofactor">
    <cofactor evidence="2">
        <name>Mn(2+)</name>
        <dbReference type="ChEBI" id="CHEBI:29035"/>
    </cofactor>
    <cofactor evidence="2">
        <name>Ni(2+)</name>
        <dbReference type="ChEBI" id="CHEBI:49786"/>
    </cofactor>
    <cofactor evidence="2">
        <name>Co(2+)</name>
        <dbReference type="ChEBI" id="CHEBI:48828"/>
    </cofactor>
    <cofactor evidence="2">
        <name>Fe(2+)</name>
        <dbReference type="ChEBI" id="CHEBI:29033"/>
    </cofactor>
    <text evidence="2">Requires divalent metal cations for activity. Binds 2 divalent metal cations per subunit.</text>
</comment>
<comment type="subunit">
    <text evidence="2">Homodimer.</text>
</comment>
<comment type="similarity">
    <text evidence="5">Belongs to the peptidase M20 family.</text>
</comment>
<organism>
    <name type="scientific">Pseudomonas sp. (strain NS671)</name>
    <dbReference type="NCBI Taxonomy" id="29441"/>
    <lineage>
        <taxon>Bacteria</taxon>
        <taxon>Pseudomonadati</taxon>
        <taxon>Pseudomonadota</taxon>
    </lineage>
</organism>
<keyword id="KW-0028">Amino-acid biosynthesis</keyword>
<keyword id="KW-0170">Cobalt</keyword>
<keyword id="KW-0903">Direct protein sequencing</keyword>
<keyword id="KW-0378">Hydrolase</keyword>
<keyword id="KW-0408">Iron</keyword>
<keyword id="KW-0464">Manganese</keyword>
<keyword id="KW-0479">Metal-binding</keyword>
<keyword id="KW-0533">Nickel</keyword>
<keyword id="KW-0614">Plasmid</keyword>
<gene>
    <name evidence="4" type="primary">hyuC</name>
</gene>
<proteinExistence type="evidence at protein level"/>
<sequence length="414" mass="45683">MKTVTISKERLRIHIEQLGEIGKTKDKGVQRLALSKEDREATLLVSEWMREAGLTVTHDHFGNLIGRKEGETPSLPSVMIGSHIDSVRNGGKFDGVIGVLAGIEIVHAISEANVVHEHSIEVVAFCEEEGSRFNDGLFGSRGMVGKVKPEDLQKVDDNNVTRYEALKTFGFGIDPDFTHQSIREIGDIKHYFEMHIEQGPYLEKNNYPIGIVSGIAGPSWFKVRLVGEAGHAGTVPMSLRKDPLVGAAEVIKEVETLCMNDPNAPTVGTVGRIAAFPGGSNIIPESVEFTLDIRDIELERRNKIIEKIEEKIKLVSNTRGLEYQIEKNMAAVPVKCSENLINSLKQSCKELEIDAPIIVSGAGHDAMFLAEITEIGMVFVRCRNGISHSPKEWAEIDDILTGTKVLYESIIKHI</sequence>
<reference key="1">
    <citation type="journal article" date="1992" name="J. Bacteriol.">
        <title>Cloning and sequencing of the genes involved in the conversion of 5-substituted hydantoins to the corresponding L-amino acids from the native plasmid of Pseudomonas sp. strain NS671.</title>
        <authorList>
            <person name="Watabe K."/>
        </authorList>
    </citation>
    <scope>NUCLEOTIDE SEQUENCE [GENOMIC DNA]</scope>
    <scope>PROTEIN SEQUENCE OF 1-11</scope>
    <scope>FUNCTION</scope>
    <scope>CATALYTIC ACTIVITY</scope>
    <source>
        <strain>NS671</strain>
    </source>
</reference>